<keyword id="KW-0963">Cytoplasm</keyword>
<keyword id="KW-0227">DNA damage</keyword>
<keyword id="KW-0234">DNA repair</keyword>
<keyword id="KW-0255">Endonuclease</keyword>
<keyword id="KW-0378">Hydrolase</keyword>
<keyword id="KW-0460">Magnesium</keyword>
<keyword id="KW-0479">Metal-binding</keyword>
<keyword id="KW-0540">Nuclease</keyword>
<dbReference type="EC" id="3.1.21.7" evidence="1"/>
<dbReference type="EMBL" id="CP001140">
    <property type="protein sequence ID" value="ACL11190.1"/>
    <property type="molecule type" value="Genomic_DNA"/>
</dbReference>
<dbReference type="RefSeq" id="WP_012608531.1">
    <property type="nucleotide sequence ID" value="NC_011766.1"/>
</dbReference>
<dbReference type="SMR" id="B8D509"/>
<dbReference type="STRING" id="490899.DKAM_0864"/>
<dbReference type="GeneID" id="7171004"/>
<dbReference type="KEGG" id="dka:DKAM_0864"/>
<dbReference type="eggNOG" id="arCOG00929">
    <property type="taxonomic scope" value="Archaea"/>
</dbReference>
<dbReference type="HOGENOM" id="CLU_047631_1_1_2"/>
<dbReference type="Proteomes" id="UP000006903">
    <property type="component" value="Chromosome"/>
</dbReference>
<dbReference type="GO" id="GO:0005737">
    <property type="term" value="C:cytoplasm"/>
    <property type="evidence" value="ECO:0007669"/>
    <property type="project" value="UniProtKB-SubCell"/>
</dbReference>
<dbReference type="GO" id="GO:0043737">
    <property type="term" value="F:deoxyribonuclease V activity"/>
    <property type="evidence" value="ECO:0007669"/>
    <property type="project" value="UniProtKB-UniRule"/>
</dbReference>
<dbReference type="GO" id="GO:0000287">
    <property type="term" value="F:magnesium ion binding"/>
    <property type="evidence" value="ECO:0007669"/>
    <property type="project" value="UniProtKB-UniRule"/>
</dbReference>
<dbReference type="GO" id="GO:0016891">
    <property type="term" value="F:RNA endonuclease activity, producing 5'-phosphomonoesters"/>
    <property type="evidence" value="ECO:0007669"/>
    <property type="project" value="TreeGrafter"/>
</dbReference>
<dbReference type="GO" id="GO:0003727">
    <property type="term" value="F:single-stranded RNA binding"/>
    <property type="evidence" value="ECO:0007669"/>
    <property type="project" value="TreeGrafter"/>
</dbReference>
<dbReference type="GO" id="GO:0006281">
    <property type="term" value="P:DNA repair"/>
    <property type="evidence" value="ECO:0007669"/>
    <property type="project" value="UniProtKB-UniRule"/>
</dbReference>
<dbReference type="CDD" id="cd06559">
    <property type="entry name" value="Endonuclease_V"/>
    <property type="match status" value="1"/>
</dbReference>
<dbReference type="Gene3D" id="3.30.2170.10">
    <property type="entry name" value="archaeoglobus fulgidus dsm 4304 superfamily"/>
    <property type="match status" value="1"/>
</dbReference>
<dbReference type="HAMAP" id="MF_00801">
    <property type="entry name" value="Endonuclease_5"/>
    <property type="match status" value="1"/>
</dbReference>
<dbReference type="InterPro" id="IPR007581">
    <property type="entry name" value="Endonuclease-V"/>
</dbReference>
<dbReference type="PANTHER" id="PTHR28511">
    <property type="entry name" value="ENDONUCLEASE V"/>
    <property type="match status" value="1"/>
</dbReference>
<dbReference type="PANTHER" id="PTHR28511:SF1">
    <property type="entry name" value="ENDONUCLEASE V"/>
    <property type="match status" value="1"/>
</dbReference>
<dbReference type="Pfam" id="PF04493">
    <property type="entry name" value="Endonuclease_5"/>
    <property type="match status" value="1"/>
</dbReference>
<reference key="1">
    <citation type="journal article" date="2009" name="J. Bacteriol.">
        <title>Complete genome sequence of the anaerobic, protein-degrading hyperthermophilic crenarchaeon Desulfurococcus kamchatkensis.</title>
        <authorList>
            <person name="Ravin N.V."/>
            <person name="Mardanov A.V."/>
            <person name="Beletsky A.V."/>
            <person name="Kublanov I.V."/>
            <person name="Kolganova T.V."/>
            <person name="Lebedinsky A.V."/>
            <person name="Chernyh N.A."/>
            <person name="Bonch-Osmolovskaya E.A."/>
            <person name="Skryabin K.G."/>
        </authorList>
    </citation>
    <scope>NUCLEOTIDE SEQUENCE [LARGE SCALE GENOMIC DNA]</scope>
    <source>
        <strain>DSM 18924 / JCM 16383 / VKM B-2413 / 1221n</strain>
    </source>
</reference>
<sequence>MGFDYQRAVMLQRILSERVLAELDSFPRIDPSRIRSVAGVDASYRGGVQVGSAVLMDYRAKMPLAYTCLTSKPPIPYVPGLLAFREAPVYIKALHRLPAKPDIILVDGHGLSHPRAFGIATHIGLVLSTPSIGVAKKPLYGEVEEVNGRKLVRAHGRIVGEVVETNQGSEIYVSIGYLIRLEDAVEVVRHLMEPGLKLPLPIHLADNYSRSKCIKELRL</sequence>
<comment type="function">
    <text evidence="1">DNA repair enzyme involved in the repair of deaminated bases. Selectively cleaves double-stranded DNA at the second phosphodiester bond 3' to a deoxyinosine leaving behind the intact lesion on the nicked DNA.</text>
</comment>
<comment type="catalytic activity">
    <reaction evidence="1">
        <text>Endonucleolytic cleavage at apurinic or apyrimidinic sites to products with a 5'-phosphate.</text>
        <dbReference type="EC" id="3.1.21.7"/>
    </reaction>
</comment>
<comment type="cofactor">
    <cofactor evidence="1">
        <name>Mg(2+)</name>
        <dbReference type="ChEBI" id="CHEBI:18420"/>
    </cofactor>
</comment>
<comment type="subcellular location">
    <subcellularLocation>
        <location evidence="1">Cytoplasm</location>
    </subcellularLocation>
</comment>
<comment type="similarity">
    <text evidence="1">Belongs to the endonuclease V family.</text>
</comment>
<protein>
    <recommendedName>
        <fullName evidence="1">Endonuclease V</fullName>
        <ecNumber evidence="1">3.1.21.7</ecNumber>
    </recommendedName>
    <alternativeName>
        <fullName evidence="1">Deoxyinosine 3'endonuclease</fullName>
    </alternativeName>
    <alternativeName>
        <fullName evidence="1">Deoxyribonuclease V</fullName>
        <shortName evidence="1">DNase V</shortName>
    </alternativeName>
</protein>
<feature type="chain" id="PRO_1000148532" description="Endonuclease V">
    <location>
        <begin position="1"/>
        <end position="219"/>
    </location>
</feature>
<feature type="binding site" evidence="1">
    <location>
        <position position="41"/>
    </location>
    <ligand>
        <name>Mg(2+)</name>
        <dbReference type="ChEBI" id="CHEBI:18420"/>
    </ligand>
</feature>
<feature type="binding site" evidence="1">
    <location>
        <position position="107"/>
    </location>
    <ligand>
        <name>Mg(2+)</name>
        <dbReference type="ChEBI" id="CHEBI:18420"/>
    </ligand>
</feature>
<feature type="site" description="Interaction with target DNA" evidence="1">
    <location>
        <position position="77"/>
    </location>
</feature>
<proteinExistence type="inferred from homology"/>
<evidence type="ECO:0000255" key="1">
    <source>
        <dbReference type="HAMAP-Rule" id="MF_00801"/>
    </source>
</evidence>
<name>NFI_DESA1</name>
<organism>
    <name type="scientific">Desulfurococcus amylolyticus (strain DSM 18924 / JCM 16383 / VKM B-2413 / 1221n)</name>
    <name type="common">Desulfurococcus kamchatkensis</name>
    <dbReference type="NCBI Taxonomy" id="490899"/>
    <lineage>
        <taxon>Archaea</taxon>
        <taxon>Thermoproteota</taxon>
        <taxon>Thermoprotei</taxon>
        <taxon>Desulfurococcales</taxon>
        <taxon>Desulfurococcaceae</taxon>
        <taxon>Desulfurococcus</taxon>
    </lineage>
</organism>
<accession>B8D509</accession>
<gene>
    <name evidence="1" type="primary">nfi</name>
    <name type="ordered locus">DKAM_0864</name>
</gene>